<sequence length="265" mass="28583">MSDLISALLLGILEGLTEFLPISSTGHLLIAEQWLGRRSDFFNIVIQAGAILAICLALRQRLWTLATGLGERDNRDYVLKVSVAFLVTAVVGLIVRKAGWQLPETLQPVAWALLIGGVWMLVAEHVAGKLPERDVVTWKVAIAVGLAQVVAGVFPGTSRSASTIFIAMLLGLSRRSAAADFVFMVGIPTMFAASGYALLEMYKEGGFGTEHWADVAVAFVAATITGFVVVKWLLSYIKKHRFTVFAVYRIVLGAALLLWLPAAAG</sequence>
<name>UPPP_XANOM</name>
<protein>
    <recommendedName>
        <fullName evidence="1">Undecaprenyl-diphosphatase</fullName>
        <ecNumber evidence="1">3.6.1.27</ecNumber>
    </recommendedName>
    <alternativeName>
        <fullName evidence="1">Bacitracin resistance protein</fullName>
    </alternativeName>
    <alternativeName>
        <fullName evidence="1">Undecaprenyl pyrophosphate phosphatase</fullName>
    </alternativeName>
</protein>
<evidence type="ECO:0000255" key="1">
    <source>
        <dbReference type="HAMAP-Rule" id="MF_01006"/>
    </source>
</evidence>
<gene>
    <name evidence="1" type="primary">uppP</name>
    <name type="ordered locus">XOO4229</name>
</gene>
<organism>
    <name type="scientific">Xanthomonas oryzae pv. oryzae (strain MAFF 311018)</name>
    <dbReference type="NCBI Taxonomy" id="342109"/>
    <lineage>
        <taxon>Bacteria</taxon>
        <taxon>Pseudomonadati</taxon>
        <taxon>Pseudomonadota</taxon>
        <taxon>Gammaproteobacteria</taxon>
        <taxon>Lysobacterales</taxon>
        <taxon>Lysobacteraceae</taxon>
        <taxon>Xanthomonas</taxon>
    </lineage>
</organism>
<comment type="function">
    <text evidence="1">Catalyzes the dephosphorylation of undecaprenyl diphosphate (UPP). Confers resistance to bacitracin.</text>
</comment>
<comment type="catalytic activity">
    <reaction evidence="1">
        <text>di-trans,octa-cis-undecaprenyl diphosphate + H2O = di-trans,octa-cis-undecaprenyl phosphate + phosphate + H(+)</text>
        <dbReference type="Rhea" id="RHEA:28094"/>
        <dbReference type="ChEBI" id="CHEBI:15377"/>
        <dbReference type="ChEBI" id="CHEBI:15378"/>
        <dbReference type="ChEBI" id="CHEBI:43474"/>
        <dbReference type="ChEBI" id="CHEBI:58405"/>
        <dbReference type="ChEBI" id="CHEBI:60392"/>
        <dbReference type="EC" id="3.6.1.27"/>
    </reaction>
</comment>
<comment type="subcellular location">
    <subcellularLocation>
        <location evidence="1">Cell inner membrane</location>
        <topology evidence="1">Multi-pass membrane protein</topology>
    </subcellularLocation>
</comment>
<comment type="miscellaneous">
    <text>Bacitracin is thought to be involved in the inhibition of peptidoglycan synthesis by sequestering undecaprenyl diphosphate, thereby reducing the pool of lipid carrier available.</text>
</comment>
<comment type="similarity">
    <text evidence="1">Belongs to the UppP family.</text>
</comment>
<accession>Q2NXJ3</accession>
<reference key="1">
    <citation type="journal article" date="2005" name="Jpn. Agric. Res. Q.">
        <title>Genome sequence of Xanthomonas oryzae pv. oryzae suggests contribution of large numbers of effector genes and insertion sequences to its race diversity.</title>
        <authorList>
            <person name="Ochiai H."/>
            <person name="Inoue Y."/>
            <person name="Takeya M."/>
            <person name="Sasaki A."/>
            <person name="Kaku H."/>
        </authorList>
    </citation>
    <scope>NUCLEOTIDE SEQUENCE [LARGE SCALE GENOMIC DNA]</scope>
    <source>
        <strain>MAFF 311018</strain>
    </source>
</reference>
<proteinExistence type="inferred from homology"/>
<dbReference type="EC" id="3.6.1.27" evidence="1"/>
<dbReference type="EMBL" id="AP008229">
    <property type="protein sequence ID" value="BAE70984.1"/>
    <property type="molecule type" value="Genomic_DNA"/>
</dbReference>
<dbReference type="RefSeq" id="WP_011260765.1">
    <property type="nucleotide sequence ID" value="NC_007705.1"/>
</dbReference>
<dbReference type="SMR" id="Q2NXJ3"/>
<dbReference type="KEGG" id="xom:XOO4229"/>
<dbReference type="HOGENOM" id="CLU_060296_2_0_6"/>
<dbReference type="GO" id="GO:0005886">
    <property type="term" value="C:plasma membrane"/>
    <property type="evidence" value="ECO:0007669"/>
    <property type="project" value="UniProtKB-SubCell"/>
</dbReference>
<dbReference type="GO" id="GO:0050380">
    <property type="term" value="F:undecaprenyl-diphosphatase activity"/>
    <property type="evidence" value="ECO:0007669"/>
    <property type="project" value="UniProtKB-UniRule"/>
</dbReference>
<dbReference type="GO" id="GO:0071555">
    <property type="term" value="P:cell wall organization"/>
    <property type="evidence" value="ECO:0007669"/>
    <property type="project" value="UniProtKB-KW"/>
</dbReference>
<dbReference type="GO" id="GO:0009252">
    <property type="term" value="P:peptidoglycan biosynthetic process"/>
    <property type="evidence" value="ECO:0007669"/>
    <property type="project" value="UniProtKB-KW"/>
</dbReference>
<dbReference type="GO" id="GO:0008360">
    <property type="term" value="P:regulation of cell shape"/>
    <property type="evidence" value="ECO:0007669"/>
    <property type="project" value="UniProtKB-KW"/>
</dbReference>
<dbReference type="GO" id="GO:0046677">
    <property type="term" value="P:response to antibiotic"/>
    <property type="evidence" value="ECO:0007669"/>
    <property type="project" value="UniProtKB-UniRule"/>
</dbReference>
<dbReference type="HAMAP" id="MF_01006">
    <property type="entry name" value="Undec_diphosphatase"/>
    <property type="match status" value="1"/>
</dbReference>
<dbReference type="InterPro" id="IPR003824">
    <property type="entry name" value="UppP"/>
</dbReference>
<dbReference type="NCBIfam" id="NF001390">
    <property type="entry name" value="PRK00281.1-4"/>
    <property type="match status" value="1"/>
</dbReference>
<dbReference type="PANTHER" id="PTHR30622">
    <property type="entry name" value="UNDECAPRENYL-DIPHOSPHATASE"/>
    <property type="match status" value="1"/>
</dbReference>
<dbReference type="PANTHER" id="PTHR30622:SF3">
    <property type="entry name" value="UNDECAPRENYL-DIPHOSPHATASE"/>
    <property type="match status" value="1"/>
</dbReference>
<dbReference type="Pfam" id="PF02673">
    <property type="entry name" value="BacA"/>
    <property type="match status" value="1"/>
</dbReference>
<feature type="chain" id="PRO_0000250279" description="Undecaprenyl-diphosphatase">
    <location>
        <begin position="1"/>
        <end position="265"/>
    </location>
</feature>
<feature type="transmembrane region" description="Helical" evidence="1">
    <location>
        <begin position="38"/>
        <end position="58"/>
    </location>
</feature>
<feature type="transmembrane region" description="Helical" evidence="1">
    <location>
        <begin position="75"/>
        <end position="95"/>
    </location>
</feature>
<feature type="transmembrane region" description="Helical" evidence="1">
    <location>
        <begin position="108"/>
        <end position="128"/>
    </location>
</feature>
<feature type="transmembrane region" description="Helical" evidence="1">
    <location>
        <begin position="135"/>
        <end position="155"/>
    </location>
</feature>
<feature type="transmembrane region" description="Helical" evidence="1">
    <location>
        <begin position="181"/>
        <end position="201"/>
    </location>
</feature>
<feature type="transmembrane region" description="Helical" evidence="1">
    <location>
        <begin position="215"/>
        <end position="235"/>
    </location>
</feature>
<feature type="transmembrane region" description="Helical" evidence="1">
    <location>
        <begin position="244"/>
        <end position="264"/>
    </location>
</feature>
<keyword id="KW-0046">Antibiotic resistance</keyword>
<keyword id="KW-0997">Cell inner membrane</keyword>
<keyword id="KW-1003">Cell membrane</keyword>
<keyword id="KW-0133">Cell shape</keyword>
<keyword id="KW-0961">Cell wall biogenesis/degradation</keyword>
<keyword id="KW-0378">Hydrolase</keyword>
<keyword id="KW-0472">Membrane</keyword>
<keyword id="KW-0573">Peptidoglycan synthesis</keyword>
<keyword id="KW-0812">Transmembrane</keyword>
<keyword id="KW-1133">Transmembrane helix</keyword>